<organism>
    <name type="scientific">Actinia fragacea</name>
    <name type="common">Strawberry anemone</name>
    <dbReference type="NCBI Taxonomy" id="396334"/>
    <lineage>
        <taxon>Eukaryota</taxon>
        <taxon>Metazoa</taxon>
        <taxon>Cnidaria</taxon>
        <taxon>Anthozoa</taxon>
        <taxon>Hexacorallia</taxon>
        <taxon>Actiniaria</taxon>
        <taxon>Actiniidae</taxon>
        <taxon>Actinia</taxon>
    </lineage>
</organism>
<dbReference type="EMBL" id="MK936901">
    <property type="protein sequence ID" value="QDM54908.1"/>
    <property type="molecule type" value="mRNA"/>
</dbReference>
<dbReference type="PDB" id="6K2G">
    <property type="method" value="X-ray"/>
    <property type="resolution" value="2.20 A"/>
    <property type="chains" value="A/B=3-179"/>
</dbReference>
<dbReference type="PDBsum" id="6K2G"/>
<dbReference type="SMR" id="A0A515MEM9"/>
<dbReference type="GO" id="GO:0005576">
    <property type="term" value="C:extracellular region"/>
    <property type="evidence" value="ECO:0007669"/>
    <property type="project" value="UniProtKB-SubCell"/>
</dbReference>
<dbReference type="GO" id="GO:0042151">
    <property type="term" value="C:nematocyst"/>
    <property type="evidence" value="ECO:0007669"/>
    <property type="project" value="UniProtKB-SubCell"/>
</dbReference>
<dbReference type="GO" id="GO:0044218">
    <property type="term" value="C:other organism cell membrane"/>
    <property type="evidence" value="ECO:0007669"/>
    <property type="project" value="UniProtKB-KW"/>
</dbReference>
<dbReference type="GO" id="GO:0046930">
    <property type="term" value="C:pore complex"/>
    <property type="evidence" value="ECO:0007669"/>
    <property type="project" value="InterPro"/>
</dbReference>
<dbReference type="GO" id="GO:0015267">
    <property type="term" value="F:channel activity"/>
    <property type="evidence" value="ECO:0007669"/>
    <property type="project" value="InterPro"/>
</dbReference>
<dbReference type="GO" id="GO:0008289">
    <property type="term" value="F:lipid binding"/>
    <property type="evidence" value="ECO:0007669"/>
    <property type="project" value="UniProtKB-KW"/>
</dbReference>
<dbReference type="GO" id="GO:0090729">
    <property type="term" value="F:toxin activity"/>
    <property type="evidence" value="ECO:0007669"/>
    <property type="project" value="UniProtKB-KW"/>
</dbReference>
<dbReference type="GO" id="GO:0051715">
    <property type="term" value="P:cytolysis in another organism"/>
    <property type="evidence" value="ECO:0007669"/>
    <property type="project" value="InterPro"/>
</dbReference>
<dbReference type="GO" id="GO:0006812">
    <property type="term" value="P:monoatomic cation transport"/>
    <property type="evidence" value="ECO:0007669"/>
    <property type="project" value="InterPro"/>
</dbReference>
<dbReference type="GO" id="GO:0046931">
    <property type="term" value="P:pore complex assembly"/>
    <property type="evidence" value="ECO:0007669"/>
    <property type="project" value="InterPro"/>
</dbReference>
<dbReference type="FunFam" id="2.60.270.20:FF:000001">
    <property type="entry name" value="DELTA-actitoxin-Afr1a"/>
    <property type="match status" value="1"/>
</dbReference>
<dbReference type="Gene3D" id="2.60.270.20">
    <property type="entry name" value="Cytolysin/lectin"/>
    <property type="match status" value="1"/>
</dbReference>
<dbReference type="InterPro" id="IPR050677">
    <property type="entry name" value="Actinoporin_PFT"/>
</dbReference>
<dbReference type="InterPro" id="IPR009104">
    <property type="entry name" value="Anemon_actinoporin-like"/>
</dbReference>
<dbReference type="InterPro" id="IPR015926">
    <property type="entry name" value="Cytolysin/lectin"/>
</dbReference>
<dbReference type="PANTHER" id="PTHR40388">
    <property type="entry name" value="BRYOPORIN"/>
    <property type="match status" value="1"/>
</dbReference>
<dbReference type="PANTHER" id="PTHR40388:SF1">
    <property type="entry name" value="BRYOPORIN"/>
    <property type="match status" value="1"/>
</dbReference>
<dbReference type="Pfam" id="PF06369">
    <property type="entry name" value="Anemone_cytotox"/>
    <property type="match status" value="1"/>
</dbReference>
<dbReference type="SUPFAM" id="SSF63724">
    <property type="entry name" value="Cytolysin/lectin"/>
    <property type="match status" value="1"/>
</dbReference>
<evidence type="ECO:0000250" key="1">
    <source>
        <dbReference type="UniProtKB" id="B9W5G6"/>
    </source>
</evidence>
<evidence type="ECO:0000250" key="2">
    <source>
        <dbReference type="UniProtKB" id="P07845"/>
    </source>
</evidence>
<evidence type="ECO:0000250" key="3">
    <source>
        <dbReference type="UniProtKB" id="P61914"/>
    </source>
</evidence>
<evidence type="ECO:0000255" key="4"/>
<evidence type="ECO:0000269" key="5">
    <source>
    </source>
</evidence>
<evidence type="ECO:0000303" key="6">
    <source>
    </source>
</evidence>
<evidence type="ECO:0000305" key="7"/>
<evidence type="ECO:0000305" key="8">
    <source>
    </source>
</evidence>
<name>ACTPE_ACTFR</name>
<reference key="1">
    <citation type="journal article" date="2019" name="Toxins">
        <title>The isolation of new pore-forming toxins from the sea anemone Actinia fragacea provides insights into the mechanisms of actinoporin evolution.</title>
        <authorList>
            <person name="Morante K."/>
            <person name="Bellomio A."/>
            <person name="Viguera A.R."/>
            <person name="Gonzalez-Manas J.M."/>
            <person name="Tsumoto K."/>
            <person name="Caaveiro J.M.M."/>
        </authorList>
    </citation>
    <scope>NUCLEOTIDE SEQUENCE [MRNA] OF 12-179</scope>
    <scope>PROTEIN SEQUENCE OF 1-20</scope>
    <scope>FUNCTION</scope>
    <scope>MASS SPECTROMETRY</scope>
    <scope>BIOPHYSICOCHEMICAL PROPERTIES</scope>
    <scope>X-RAY CRYSTALLOGRAPHY (2.2 ANGSTROMS) OF 3-179</scope>
</reference>
<proteinExistence type="evidence at protein level"/>
<sequence length="179" mass="19776">SADVAGAVIDGAGLGFDVLKTVLEALGNVKRKIAVGIDNESGRTWTAMNTYFRSGTSDIVLPHKVAHGKALLYNGQKNRGPVATGVVGVIAYSMSDGNTLAVLFSVPYDYNWYSNWWNVRVYKGQKRANQRMYEELYYHRSPFRGDNGWHSRSLGYGLKSRGFMNSSGHAILEIHVTKA</sequence>
<accession>A0A515MEM9</accession>
<keyword id="KW-0002">3D-structure</keyword>
<keyword id="KW-0204">Cytolysis</keyword>
<keyword id="KW-0903">Direct protein sequencing</keyword>
<keyword id="KW-0406">Ion transport</keyword>
<keyword id="KW-0446">Lipid-binding</keyword>
<keyword id="KW-0472">Membrane</keyword>
<keyword id="KW-0166">Nematocyst</keyword>
<keyword id="KW-0964">Secreted</keyword>
<keyword id="KW-1052">Target cell membrane</keyword>
<keyword id="KW-1053">Target membrane</keyword>
<keyword id="KW-0800">Toxin</keyword>
<keyword id="KW-0812">Transmembrane</keyword>
<keyword id="KW-0813">Transport</keyword>
<feature type="chain" id="PRO_0000453825" description="DELTA-actitoxin-Afr1e" evidence="8">
    <location>
        <begin position="1"/>
        <end position="179"/>
    </location>
</feature>
<feature type="region of interest" description="N-terminal alpha-helix that contributes to the pore" evidence="1">
    <location>
        <begin position="1"/>
        <end position="29"/>
    </location>
</feature>
<feature type="region of interest" description="N-terminal region" evidence="3">
    <location>
        <begin position="11"/>
        <end position="30"/>
    </location>
</feature>
<feature type="region of interest" description="Trp-rich region, which is important for the binding to lipid membrane" evidence="3">
    <location>
        <begin position="105"/>
        <end position="120"/>
    </location>
</feature>
<feature type="short sequence motif" description="Cell attachment site, crucial for protein stability" evidence="2 4">
    <location>
        <begin position="144"/>
        <end position="146"/>
    </location>
</feature>
<feature type="binding site" description="in subunit A; in oligomeric forms only" evidence="1">
    <location>
        <position position="31"/>
    </location>
    <ligand>
        <name>an N-(acyl)-sphingosylphosphocholine</name>
        <dbReference type="ChEBI" id="CHEBI:64583"/>
        <label>1</label>
        <note>bridging lipid L1</note>
    </ligand>
</feature>
<feature type="binding site" evidence="1">
    <location>
        <position position="51"/>
    </location>
    <ligand>
        <name>N-acetyl-D-glucosamine 6-sulfate</name>
        <dbReference type="ChEBI" id="CHEBI:84775"/>
    </ligand>
</feature>
<feature type="binding site" description="in monomeric and oligomeric forms" evidence="1">
    <location>
        <position position="53"/>
    </location>
    <ligand>
        <name>an N-(acyl)-sphingosylphosphocholine</name>
        <dbReference type="ChEBI" id="CHEBI:64583"/>
        <label>2</label>
        <note>lipid L2</note>
    </ligand>
</feature>
<feature type="binding site" evidence="1">
    <location>
        <position position="53"/>
    </location>
    <ligand>
        <name>N-acetyl-D-glucosamine 6-sulfate</name>
        <dbReference type="ChEBI" id="CHEBI:84775"/>
    </ligand>
</feature>
<feature type="binding site" description="in monomeric and oligomeric forms" evidence="1">
    <location>
        <position position="54"/>
    </location>
    <ligand>
        <name>an N-(acyl)-sphingosylphosphocholine</name>
        <dbReference type="ChEBI" id="CHEBI:64583"/>
        <label>2</label>
        <note>lipid L2</note>
    </ligand>
</feature>
<feature type="binding site" description="in subunit B; in oligomeric forms only" evidence="1">
    <location>
        <position position="79"/>
    </location>
    <ligand>
        <name>an N-(acyl)-sphingosylphosphocholine</name>
        <dbReference type="ChEBI" id="CHEBI:64583"/>
        <label>1</label>
        <note>bridging lipid L1</note>
    </ligand>
</feature>
<feature type="binding site" description="in monomeric and oligomeric forms" evidence="1">
    <location>
        <position position="85"/>
    </location>
    <ligand>
        <name>an N-(acyl)-sphingosylphosphocholine</name>
        <dbReference type="ChEBI" id="CHEBI:64583"/>
        <label>2</label>
        <note>lipid L2</note>
    </ligand>
</feature>
<feature type="binding site" description="in monomeric and oligomeric forms" evidence="1">
    <location>
        <position position="108"/>
    </location>
    <ligand>
        <name>an N-(acyl)-sphingosylphosphocholine</name>
        <dbReference type="ChEBI" id="CHEBI:64583"/>
        <label>2</label>
        <note>lipid L2</note>
    </ligand>
</feature>
<feature type="binding site" description="in monomeric and oligomeric forms" evidence="1">
    <location>
        <position position="113"/>
    </location>
    <ligand>
        <name>an N-(acyl)-sphingosylphosphocholine</name>
        <dbReference type="ChEBI" id="CHEBI:64583"/>
        <label>2</label>
        <note>lipid L2</note>
    </ligand>
</feature>
<feature type="binding site" description="in monomeric and oligomeric forms" evidence="1">
    <location>
        <position position="114"/>
    </location>
    <ligand>
        <name>an N-(acyl)-sphingosylphosphocholine</name>
        <dbReference type="ChEBI" id="CHEBI:64583"/>
        <label>5</label>
        <note>lipid L5</note>
    </ligand>
</feature>
<feature type="binding site" description="in monomeric and oligomeric forms" evidence="1">
    <location>
        <position position="116"/>
    </location>
    <ligand>
        <name>an N-(acyl)-sphingosylphosphocholine</name>
        <dbReference type="ChEBI" id="CHEBI:64583"/>
        <label>3</label>
        <note>lipid L3</note>
    </ligand>
</feature>
<feature type="binding site" description="in monomeric and oligomeric forms" evidence="1">
    <location>
        <position position="133"/>
    </location>
    <ligand>
        <name>an N-(acyl)-sphingosylphosphocholine</name>
        <dbReference type="ChEBI" id="CHEBI:64583"/>
        <label>4</label>
        <note>lipid L4</note>
    </ligand>
</feature>
<feature type="binding site" description="in monomeric and oligomeric forms" evidence="1">
    <location>
        <position position="137"/>
    </location>
    <ligand>
        <name>an N-(acyl)-sphingosylphosphocholine</name>
        <dbReference type="ChEBI" id="CHEBI:64583"/>
        <label>3</label>
        <note>lipid L3</note>
    </ligand>
</feature>
<feature type="binding site" description="in monomeric and oligomeric forms" evidence="1">
    <location>
        <position position="138"/>
    </location>
    <ligand>
        <name>an N-(acyl)-sphingosylphosphocholine</name>
        <dbReference type="ChEBI" id="CHEBI:64583"/>
        <label>4</label>
        <note>lipid L4</note>
    </ligand>
</feature>
<feature type="binding site" evidence="1">
    <location>
        <position position="138"/>
    </location>
    <ligand>
        <name>N-acetyl-D-glucosamine 6-sulfate</name>
        <dbReference type="ChEBI" id="CHEBI:84775"/>
    </ligand>
</feature>
<feature type="binding site" description="in monomeric and oligomeric forms" evidence="1">
    <location>
        <position position="144"/>
    </location>
    <ligand>
        <name>an N-(acyl)-sphingosylphosphocholine</name>
        <dbReference type="ChEBI" id="CHEBI:64583"/>
        <label>5</label>
        <note>lipid L5</note>
    </ligand>
</feature>
<feature type="binding site" description="in subunit A; in oligomeric forms only" evidence="1">
    <location>
        <position position="168"/>
    </location>
    <ligand>
        <name>an N-(acyl)-sphingosylphosphocholine</name>
        <dbReference type="ChEBI" id="CHEBI:64583"/>
        <label>1</label>
        <note>bridging lipid L1</note>
    </ligand>
</feature>
<feature type="site" description="Part of the hydrophobic cavity (in subunit A) that receives Val-60 from the adjacent subunit (B); essential in hemolysis, since it is critical for pore formation in cholesterol-rich membrane cells (such as red blood cells)" evidence="1">
    <location>
        <position position="16"/>
    </location>
</feature>
<feature type="site" description="Protrudes from one subunit (B) and inserts into the hydrophobic cavity from the adjacent subunit (A)" evidence="1">
    <location>
        <position position="60"/>
    </location>
</feature>
<feature type="site" description="Part of the hydrophobic cavity (in subunit A) that receives Val-60 from the adjacent subunit (B)" evidence="1">
    <location>
        <position position="149"/>
    </location>
</feature>
<feature type="site" description="Part of the hydrophobic cavity (in subunit A) that receives Val-60 from the adjacent subunit (B)" evidence="1">
    <location>
        <position position="163"/>
    </location>
</feature>
<protein>
    <recommendedName>
        <fullName evidence="7">DELTA-actitoxin-Afr1e</fullName>
        <shortName evidence="1 7">DELTA-AITX-Afr1e</shortName>
    </recommendedName>
    <alternativeName>
        <fullName evidence="1">Alpha-helical pore-forming toxin</fullName>
        <shortName evidence="1">PFT</shortName>
    </alternativeName>
    <alternativeName>
        <fullName evidence="1">Cytolysin</fullName>
    </alternativeName>
    <alternativeName>
        <fullName evidence="6">Fragaceatoxin E</fullName>
        <shortName evidence="6">fraE</shortName>
    </alternativeName>
</protein>
<comment type="function">
    <text evidence="1 5">Pore-forming toxin (PFT) that consists of a crown-shaped octamer or nonamer that forms cation-selective hydrophilic pores of about 1.5 nm (inside) and 13 nm (outside) and causes cytolysis (By similarity). It causes cardiac stimulation (By similarity). Also causes hemolysis (HC(50)=1.6 nM) (PubMed:31295915). Interestingly, the Phe-16 is crucial for hemolysis (By similarity). Pore formation is a multi-step process that involves specific recognition of membrane sphingomyelin (but neither cholesterol nor phosphatidylcholine) using aromatic rich region and adjacent phosphocholine (POC) binding site, firm binding to the membrane (mainly driven by hydrophobic interactions) accompanied by the transfer of the N-terminal region to the lipid-water interface and finally pore formation after oligomerization of monomers (By similarity). It is probable that a dimeric form is an assembly intermediate before the complete oligomerization (By similarity). The formation of stable pores occurs only in vesicles composed of DOPC/SM (there is no oligomerization when the PFT is treated with vesicles of DOPC or SM alone) (By similarity). The transmembrane pore displays 8 lateral perforations, one at each subunit-subunit interface, partially occupied by the acyl-chain region of a bridging lipid (By similarity). Each pore contains 24 lipid molecules, firmly bound to each subunit, that is, 3 lipids (L1, L2, L3, L4 and/or L5) are associated to each subunit (By similarity). Lipid L1 bridges 2 subunits, whereas lipids L2 and L3 bind to sites at single subunit (By similarity).</text>
</comment>
<comment type="biophysicochemical properties">
    <temperatureDependence>
        <text evidence="5">Stable up to about 51 degrees Celsius.</text>
    </temperatureDependence>
</comment>
<comment type="subunit">
    <text evidence="1">Octamer or nonamer in membranes. Monomer in the soluble state.</text>
</comment>
<comment type="subcellular location">
    <subcellularLocation>
        <location evidence="5">Secreted</location>
    </subcellularLocation>
    <subcellularLocation>
        <location evidence="2">Nematocyst</location>
    </subcellularLocation>
    <subcellularLocation>
        <location evidence="1">Target cell membrane</location>
    </subcellularLocation>
    <text evidence="1">Forms an alpha-helical membrane channel in the prey.</text>
</comment>
<comment type="domain">
    <text evidence="3">Composed of a long N-terminal alpha-helix and a core region rich in beta-sheet structures. Before the pore formation, the alpha-helix binds the lipid membrane, partitions into the lipid-water interface and stabilizes the monomeric molecule on the membrane. Finally, it traverses the bilayer, thus forming the transmembrane pore.</text>
</comment>
<comment type="mass spectrometry" mass="19778.0" error="3.0" method="Electrospray" evidence="5"/>
<comment type="miscellaneous">
    <text evidence="1">This protein has been found to bind carbohydrates, since it shows a substantial delay in elution profile in size-exclusion chromatography. The carbohydrate pocket ovelaps with the lipid-binding module of actinoporins.</text>
</comment>
<comment type="similarity">
    <text evidence="7">Belongs to the actinoporin family. Sea anemone subfamily.</text>
</comment>